<sequence length="150" mass="17801">MKYQQLENLESGWKWKYLVKKHREGELITRYVEASAAQEAVNLLLALENEPVRVNVWIDRHMNPALLNRMKQTIRARRKRHFNAEHQHTRKKSIDLEFMVWQRLAGLAQRRGKTLSETIVQLIEDAEHKEKYATQMTTLKQDLQALLGKK</sequence>
<dbReference type="EMBL" id="CP001120">
    <property type="protein sequence ID" value="ACF68498.1"/>
    <property type="molecule type" value="Genomic_DNA"/>
</dbReference>
<dbReference type="RefSeq" id="WP_000877172.1">
    <property type="nucleotide sequence ID" value="NC_011083.1"/>
</dbReference>
<dbReference type="SMR" id="B4TDZ6"/>
<dbReference type="KEGG" id="seh:SeHA_C1178"/>
<dbReference type="HOGENOM" id="CLU_142157_0_0_6"/>
<dbReference type="Proteomes" id="UP000001866">
    <property type="component" value="Chromosome"/>
</dbReference>
<dbReference type="GO" id="GO:0005737">
    <property type="term" value="C:cytoplasm"/>
    <property type="evidence" value="ECO:0007669"/>
    <property type="project" value="UniProtKB-SubCell"/>
</dbReference>
<dbReference type="GO" id="GO:0043565">
    <property type="term" value="F:sequence-specific DNA binding"/>
    <property type="evidence" value="ECO:0007669"/>
    <property type="project" value="UniProtKB-UniRule"/>
</dbReference>
<dbReference type="GO" id="GO:0051301">
    <property type="term" value="P:cell division"/>
    <property type="evidence" value="ECO:0007669"/>
    <property type="project" value="UniProtKB-UniRule"/>
</dbReference>
<dbReference type="GO" id="GO:0006355">
    <property type="term" value="P:regulation of DNA-templated transcription"/>
    <property type="evidence" value="ECO:0007669"/>
    <property type="project" value="InterPro"/>
</dbReference>
<dbReference type="Gene3D" id="1.20.1270.380">
    <property type="entry name" value="MatP, N-terminal domain"/>
    <property type="match status" value="1"/>
</dbReference>
<dbReference type="Gene3D" id="1.10.1220.10">
    <property type="entry name" value="Met repressor-like"/>
    <property type="match status" value="1"/>
</dbReference>
<dbReference type="HAMAP" id="MF_01073">
    <property type="entry name" value="MatP"/>
    <property type="match status" value="1"/>
</dbReference>
<dbReference type="InterPro" id="IPR013321">
    <property type="entry name" value="Arc_rbn_hlx_hlx"/>
</dbReference>
<dbReference type="InterPro" id="IPR009390">
    <property type="entry name" value="MatP"/>
</dbReference>
<dbReference type="InterPro" id="IPR035375">
    <property type="entry name" value="MatP_C"/>
</dbReference>
<dbReference type="InterPro" id="IPR035087">
    <property type="entry name" value="MatP_N"/>
</dbReference>
<dbReference type="InterPro" id="IPR038339">
    <property type="entry name" value="MatP_N_sf"/>
</dbReference>
<dbReference type="NCBIfam" id="NF003471">
    <property type="entry name" value="PRK05097.1"/>
    <property type="match status" value="1"/>
</dbReference>
<dbReference type="Pfam" id="PF06303">
    <property type="entry name" value="MatP"/>
    <property type="match status" value="1"/>
</dbReference>
<dbReference type="Pfam" id="PF17414">
    <property type="entry name" value="MatP_C"/>
    <property type="match status" value="1"/>
</dbReference>
<name>MATP_SALHS</name>
<gene>
    <name evidence="1" type="primary">matP</name>
    <name type="ordered locus">SeHA_C1178</name>
</gene>
<keyword id="KW-0131">Cell cycle</keyword>
<keyword id="KW-0132">Cell division</keyword>
<keyword id="KW-0963">Cytoplasm</keyword>
<keyword id="KW-0238">DNA-binding</keyword>
<organism>
    <name type="scientific">Salmonella heidelberg (strain SL476)</name>
    <dbReference type="NCBI Taxonomy" id="454169"/>
    <lineage>
        <taxon>Bacteria</taxon>
        <taxon>Pseudomonadati</taxon>
        <taxon>Pseudomonadota</taxon>
        <taxon>Gammaproteobacteria</taxon>
        <taxon>Enterobacterales</taxon>
        <taxon>Enterobacteriaceae</taxon>
        <taxon>Salmonella</taxon>
    </lineage>
</organism>
<comment type="function">
    <text evidence="1">Required for spatial organization of the terminus region of the chromosome (Ter macrodomain) during the cell cycle. Prevents early segregation of duplicated Ter macrodomains during cell division. Binds specifically to matS, which is a 13 bp signature motif repeated within the Ter macrodomain.</text>
</comment>
<comment type="subunit">
    <text evidence="1">Homodimer.</text>
</comment>
<comment type="subcellular location">
    <subcellularLocation>
        <location evidence="1">Cytoplasm</location>
    </subcellularLocation>
</comment>
<comment type="similarity">
    <text evidence="1">Belongs to the MatP family.</text>
</comment>
<feature type="chain" id="PRO_1000136677" description="Macrodomain Ter protein">
    <location>
        <begin position="1"/>
        <end position="150"/>
    </location>
</feature>
<evidence type="ECO:0000255" key="1">
    <source>
        <dbReference type="HAMAP-Rule" id="MF_01073"/>
    </source>
</evidence>
<reference key="1">
    <citation type="journal article" date="2011" name="J. Bacteriol.">
        <title>Comparative genomics of 28 Salmonella enterica isolates: evidence for CRISPR-mediated adaptive sublineage evolution.</title>
        <authorList>
            <person name="Fricke W.F."/>
            <person name="Mammel M.K."/>
            <person name="McDermott P.F."/>
            <person name="Tartera C."/>
            <person name="White D.G."/>
            <person name="Leclerc J.E."/>
            <person name="Ravel J."/>
            <person name="Cebula T.A."/>
        </authorList>
    </citation>
    <scope>NUCLEOTIDE SEQUENCE [LARGE SCALE GENOMIC DNA]</scope>
    <source>
        <strain>SL476</strain>
    </source>
</reference>
<protein>
    <recommendedName>
        <fullName evidence="1">Macrodomain Ter protein</fullName>
    </recommendedName>
</protein>
<accession>B4TDZ6</accession>
<proteinExistence type="inferred from homology"/>